<sequence>LKCNRLIPPFWKTCPEGKNLCYKMTMRLAPKVPVKRGCIDVCPKSSLLIKYMCCNTNKCN</sequence>
<evidence type="ECO:0000250" key="1">
    <source>
        <dbReference type="UniProtKB" id="P60301"/>
    </source>
</evidence>
<evidence type="ECO:0000250" key="2">
    <source>
        <dbReference type="UniProtKB" id="P60304"/>
    </source>
</evidence>
<evidence type="ECO:0000269" key="3">
    <source>
    </source>
</evidence>
<evidence type="ECO:0000269" key="4">
    <source ref="1"/>
</evidence>
<evidence type="ECO:0000303" key="5">
    <source>
    </source>
</evidence>
<evidence type="ECO:0000303" key="6">
    <source ref="1"/>
</evidence>
<evidence type="ECO:0000305" key="7"/>
<evidence type="ECO:0000305" key="8">
    <source>
    </source>
</evidence>
<name>3SA3_NAJMO</name>
<accession>P01470</accession>
<proteinExistence type="evidence at protein level"/>
<dbReference type="PIR" id="A01730">
    <property type="entry name" value="H3NJ3M"/>
</dbReference>
<dbReference type="SMR" id="P01470"/>
<dbReference type="GO" id="GO:0005576">
    <property type="term" value="C:extracellular region"/>
    <property type="evidence" value="ECO:0007669"/>
    <property type="project" value="UniProtKB-SubCell"/>
</dbReference>
<dbReference type="GO" id="GO:0016020">
    <property type="term" value="C:membrane"/>
    <property type="evidence" value="ECO:0007669"/>
    <property type="project" value="UniProtKB-KW"/>
</dbReference>
<dbReference type="GO" id="GO:0044218">
    <property type="term" value="C:other organism cell membrane"/>
    <property type="evidence" value="ECO:0007669"/>
    <property type="project" value="UniProtKB-KW"/>
</dbReference>
<dbReference type="GO" id="GO:0090729">
    <property type="term" value="F:toxin activity"/>
    <property type="evidence" value="ECO:0007669"/>
    <property type="project" value="UniProtKB-KW"/>
</dbReference>
<dbReference type="GO" id="GO:0031640">
    <property type="term" value="P:killing of cells of another organism"/>
    <property type="evidence" value="ECO:0007669"/>
    <property type="project" value="UniProtKB-KW"/>
</dbReference>
<dbReference type="CDD" id="cd00206">
    <property type="entry name" value="TFP_snake_toxin"/>
    <property type="match status" value="1"/>
</dbReference>
<dbReference type="FunFam" id="2.10.60.10:FF:000024">
    <property type="entry name" value="Cytotoxin 1"/>
    <property type="match status" value="1"/>
</dbReference>
<dbReference type="Gene3D" id="2.10.60.10">
    <property type="entry name" value="CD59"/>
    <property type="match status" value="1"/>
</dbReference>
<dbReference type="InterPro" id="IPR003572">
    <property type="entry name" value="Cytotoxin_Cobra"/>
</dbReference>
<dbReference type="InterPro" id="IPR003571">
    <property type="entry name" value="Snake_3FTx"/>
</dbReference>
<dbReference type="InterPro" id="IPR045860">
    <property type="entry name" value="Snake_toxin-like_sf"/>
</dbReference>
<dbReference type="InterPro" id="IPR018354">
    <property type="entry name" value="Snake_toxin_con_site"/>
</dbReference>
<dbReference type="InterPro" id="IPR054131">
    <property type="entry name" value="Toxin_cobra-type"/>
</dbReference>
<dbReference type="Pfam" id="PF21947">
    <property type="entry name" value="Toxin_cobra-type"/>
    <property type="match status" value="1"/>
</dbReference>
<dbReference type="PRINTS" id="PR00282">
    <property type="entry name" value="CYTOTOXIN"/>
</dbReference>
<dbReference type="SUPFAM" id="SSF57302">
    <property type="entry name" value="Snake toxin-like"/>
    <property type="match status" value="1"/>
</dbReference>
<dbReference type="PROSITE" id="PS00272">
    <property type="entry name" value="SNAKE_TOXIN"/>
    <property type="match status" value="1"/>
</dbReference>
<comment type="function">
    <text evidence="1 2 3">Shows cytolytic activity on many different cells by forming pore in lipid membranes (PubMed:8182052). In vivo, increases heart rate or kills the animal by cardiac arrest. In addition, it binds to heparin with high affinity, interacts with Kv channel-interacting protein 1 (KCNIP1) in a calcium-independent manner, and binds to integrin alpha-V/beta-3 (ITGAV/ITGB3) with moderate affinity.</text>
</comment>
<comment type="subunit">
    <text evidence="1">Monomer in solution; Homodimer and oligomer in the presence of negatively charged lipids forming a pore with a size ranging between 20 and 30 Angstroms.</text>
</comment>
<comment type="subcellular location">
    <subcellularLocation>
        <location evidence="4">Secreted</location>
    </subcellularLocation>
    <subcellularLocation>
        <location evidence="1">Target cell membrane</location>
    </subcellularLocation>
</comment>
<comment type="tissue specificity">
    <text evidence="7">Expressed by the venom gland.</text>
</comment>
<comment type="toxic dose">
    <text>LD(50) is 1.82 mg/kg by intravenous injection.</text>
</comment>
<comment type="miscellaneous">
    <text evidence="8">Is classified as a P-type cytotoxin, since a proline residue stands at position 30 (Pro-31 in standard classification).</text>
</comment>
<comment type="similarity">
    <text evidence="7">Belongs to the three-finger toxin family. Short-chain subfamily. Type IA cytotoxin sub-subfamily.</text>
</comment>
<organism>
    <name type="scientific">Naja mossambica</name>
    <name type="common">Mozambique spitting cobra</name>
    <dbReference type="NCBI Taxonomy" id="8644"/>
    <lineage>
        <taxon>Eukaryota</taxon>
        <taxon>Metazoa</taxon>
        <taxon>Chordata</taxon>
        <taxon>Craniata</taxon>
        <taxon>Vertebrata</taxon>
        <taxon>Euteleostomi</taxon>
        <taxon>Lepidosauria</taxon>
        <taxon>Squamata</taxon>
        <taxon>Bifurcata</taxon>
        <taxon>Unidentata</taxon>
        <taxon>Episquamata</taxon>
        <taxon>Toxicofera</taxon>
        <taxon>Serpentes</taxon>
        <taxon>Colubroidea</taxon>
        <taxon>Elapidae</taxon>
        <taxon>Elapinae</taxon>
        <taxon>Naja</taxon>
    </lineage>
</organism>
<feature type="chain" id="PRO_0000093507" description="Cytotoxin 3" evidence="4">
    <location>
        <begin position="1"/>
        <end position="60"/>
    </location>
</feature>
<feature type="disulfide bond" evidence="1">
    <location>
        <begin position="3"/>
        <end position="21"/>
    </location>
</feature>
<feature type="disulfide bond" evidence="1">
    <location>
        <begin position="14"/>
        <end position="38"/>
    </location>
</feature>
<feature type="disulfide bond" evidence="1">
    <location>
        <begin position="42"/>
        <end position="53"/>
    </location>
</feature>
<feature type="disulfide bond" evidence="1">
    <location>
        <begin position="54"/>
        <end position="59"/>
    </location>
</feature>
<reference key="1">
    <citation type="journal article" date="1974" name="Biochim. Biophys. Acta">
        <title>Snake venom toxins. The amino acid sequences of three cytotoxin homologues from Naja mossambica mossambica venom.</title>
        <authorList>
            <person name="Louw A.I."/>
        </authorList>
    </citation>
    <scope>PROTEIN SEQUENCE</scope>
    <scope>SUBCELLULAR LOCATION</scope>
    <source>
        <tissue>Venom</tissue>
    </source>
</reference>
<reference key="2">
    <citation type="journal article" date="1994" name="J. Biol. Chem.">
        <title>Two distinct types of cardiotoxin as revealed by the structure and activity relationship of their interaction with zwitterionic phospholipid dispersions.</title>
        <authorList>
            <person name="Chien K.-Y."/>
            <person name="Chiang C.-M."/>
            <person name="Hseu Y.-C."/>
            <person name="Vyas A.A."/>
            <person name="Rule G.S."/>
            <person name="Wu W.-G."/>
        </authorList>
    </citation>
    <scope>FUNCTION</scope>
    <scope>APPARTENANCE TO P-TYPE CYTOTOXIN GROUP</scope>
</reference>
<keyword id="KW-0123">Cardiotoxin</keyword>
<keyword id="KW-0204">Cytolysis</keyword>
<keyword id="KW-0903">Direct protein sequencing</keyword>
<keyword id="KW-1015">Disulfide bond</keyword>
<keyword id="KW-0472">Membrane</keyword>
<keyword id="KW-0964">Secreted</keyword>
<keyword id="KW-1052">Target cell membrane</keyword>
<keyword id="KW-1053">Target membrane</keyword>
<keyword id="KW-0800">Toxin</keyword>
<protein>
    <recommendedName>
        <fullName evidence="7">Cytotoxin 3</fullName>
    </recommendedName>
    <alternativeName>
        <fullName evidence="5">CTX M4</fullName>
    </alternativeName>
    <alternativeName>
        <fullName evidence="6">Cytotoxin V(II)3</fullName>
    </alternativeName>
</protein>